<organism>
    <name type="scientific">Salmonella typhi</name>
    <dbReference type="NCBI Taxonomy" id="90370"/>
    <lineage>
        <taxon>Bacteria</taxon>
        <taxon>Pseudomonadati</taxon>
        <taxon>Pseudomonadota</taxon>
        <taxon>Gammaproteobacteria</taxon>
        <taxon>Enterobacterales</taxon>
        <taxon>Enterobacteriaceae</taxon>
        <taxon>Salmonella</taxon>
    </lineage>
</organism>
<feature type="initiator methionine" description="Removed" evidence="1">
    <location>
        <position position="1"/>
    </location>
</feature>
<feature type="chain" id="PRO_0000097825" description="Cyclic pyranopterin monophosphate synthase">
    <location>
        <begin position="2"/>
        <end position="161"/>
    </location>
</feature>
<feature type="active site" evidence="2">
    <location>
        <position position="128"/>
    </location>
</feature>
<feature type="binding site" evidence="2">
    <location>
        <begin position="75"/>
        <end position="77"/>
    </location>
    <ligand>
        <name>substrate</name>
    </ligand>
</feature>
<feature type="binding site" evidence="2">
    <location>
        <begin position="113"/>
        <end position="114"/>
    </location>
    <ligand>
        <name>substrate</name>
    </ligand>
</feature>
<accession>Q8Z887</accession>
<comment type="function">
    <text evidence="2">Catalyzes the conversion of (8S)-3',8-cyclo-7,8-dihydroguanosine 5'-triphosphate to cyclic pyranopterin monophosphate (cPMP).</text>
</comment>
<comment type="catalytic activity">
    <reaction evidence="2">
        <text>(8S)-3',8-cyclo-7,8-dihydroguanosine 5'-triphosphate = cyclic pyranopterin phosphate + diphosphate</text>
        <dbReference type="Rhea" id="RHEA:49580"/>
        <dbReference type="ChEBI" id="CHEBI:33019"/>
        <dbReference type="ChEBI" id="CHEBI:59648"/>
        <dbReference type="ChEBI" id="CHEBI:131766"/>
        <dbReference type="EC" id="4.6.1.17"/>
    </reaction>
</comment>
<comment type="pathway">
    <text evidence="2">Cofactor biosynthesis; molybdopterin biosynthesis.</text>
</comment>
<comment type="subunit">
    <text evidence="2">Homohexamer; trimer of dimers.</text>
</comment>
<comment type="similarity">
    <text evidence="2">Belongs to the MoaC family.</text>
</comment>
<sequence>MSQLTHINAAGEAHMVDVSAKAETVREARAEAFVTMRSETLAMIVDGKHHKGDVFATARIAGIQAAKRTWELIPLCHPLLLSKVEIQLQAEPEHNRVRIESLCRLTGKTGVEMEALTAASVAALTIYDMCKAVQKDIVIGPVRLLAKSGGKSGDFKVDAHD</sequence>
<name>MOAC_SALTI</name>
<protein>
    <recommendedName>
        <fullName evidence="2">Cyclic pyranopterin monophosphate synthase</fullName>
        <ecNumber evidence="2">4.6.1.17</ecNumber>
    </recommendedName>
    <alternativeName>
        <fullName evidence="2">Molybdenum cofactor biosynthesis protein C</fullName>
    </alternativeName>
</protein>
<dbReference type="EC" id="4.6.1.17" evidence="2"/>
<dbReference type="EMBL" id="AL513382">
    <property type="protein sequence ID" value="CAD05252.1"/>
    <property type="molecule type" value="Genomic_DNA"/>
</dbReference>
<dbReference type="EMBL" id="AE014613">
    <property type="protein sequence ID" value="AAO69701.1"/>
    <property type="molecule type" value="Genomic_DNA"/>
</dbReference>
<dbReference type="RefSeq" id="NP_455345.1">
    <property type="nucleotide sequence ID" value="NC_003198.1"/>
</dbReference>
<dbReference type="RefSeq" id="WP_000080893.1">
    <property type="nucleotide sequence ID" value="NZ_WSUR01000021.1"/>
</dbReference>
<dbReference type="SMR" id="Q8Z887"/>
<dbReference type="STRING" id="220341.gene:17584842"/>
<dbReference type="KEGG" id="stt:t2083"/>
<dbReference type="KEGG" id="sty:STY0838"/>
<dbReference type="PATRIC" id="fig|220341.7.peg.843"/>
<dbReference type="eggNOG" id="COG0315">
    <property type="taxonomic scope" value="Bacteria"/>
</dbReference>
<dbReference type="HOGENOM" id="CLU_074693_1_1_6"/>
<dbReference type="OMA" id="IWDMVKS"/>
<dbReference type="OrthoDB" id="9794429at2"/>
<dbReference type="UniPathway" id="UPA00344"/>
<dbReference type="Proteomes" id="UP000000541">
    <property type="component" value="Chromosome"/>
</dbReference>
<dbReference type="Proteomes" id="UP000002670">
    <property type="component" value="Chromosome"/>
</dbReference>
<dbReference type="GO" id="GO:0061799">
    <property type="term" value="F:cyclic pyranopterin monophosphate synthase activity"/>
    <property type="evidence" value="ECO:0007669"/>
    <property type="project" value="UniProtKB-UniRule"/>
</dbReference>
<dbReference type="GO" id="GO:0006777">
    <property type="term" value="P:Mo-molybdopterin cofactor biosynthetic process"/>
    <property type="evidence" value="ECO:0007669"/>
    <property type="project" value="UniProtKB-UniRule"/>
</dbReference>
<dbReference type="CDD" id="cd01420">
    <property type="entry name" value="MoaC_PE"/>
    <property type="match status" value="1"/>
</dbReference>
<dbReference type="FunFam" id="3.30.70.640:FF:000001">
    <property type="entry name" value="Cyclic pyranopterin monophosphate synthase"/>
    <property type="match status" value="1"/>
</dbReference>
<dbReference type="Gene3D" id="3.30.70.640">
    <property type="entry name" value="Molybdopterin cofactor biosynthesis C (MoaC) domain"/>
    <property type="match status" value="1"/>
</dbReference>
<dbReference type="HAMAP" id="MF_01224_B">
    <property type="entry name" value="MoaC_B"/>
    <property type="match status" value="1"/>
</dbReference>
<dbReference type="InterPro" id="IPR023045">
    <property type="entry name" value="MoaC"/>
</dbReference>
<dbReference type="InterPro" id="IPR047594">
    <property type="entry name" value="MoaC_bact/euk"/>
</dbReference>
<dbReference type="InterPro" id="IPR036522">
    <property type="entry name" value="MoaC_sf"/>
</dbReference>
<dbReference type="InterPro" id="IPR050105">
    <property type="entry name" value="MoCo_biosynth_MoaA/MoaC"/>
</dbReference>
<dbReference type="InterPro" id="IPR002820">
    <property type="entry name" value="Mopterin_CF_biosynth-C_dom"/>
</dbReference>
<dbReference type="NCBIfam" id="TIGR00581">
    <property type="entry name" value="moaC"/>
    <property type="match status" value="1"/>
</dbReference>
<dbReference type="NCBIfam" id="NF006870">
    <property type="entry name" value="PRK09364.1"/>
    <property type="match status" value="1"/>
</dbReference>
<dbReference type="PANTHER" id="PTHR22960">
    <property type="entry name" value="MOLYBDOPTERIN COFACTOR SYNTHESIS PROTEIN A"/>
    <property type="match status" value="1"/>
</dbReference>
<dbReference type="Pfam" id="PF01967">
    <property type="entry name" value="MoaC"/>
    <property type="match status" value="1"/>
</dbReference>
<dbReference type="SUPFAM" id="SSF55040">
    <property type="entry name" value="Molybdenum cofactor biosynthesis protein C, MoaC"/>
    <property type="match status" value="1"/>
</dbReference>
<reference key="1">
    <citation type="journal article" date="2001" name="Nature">
        <title>Complete genome sequence of a multiple drug resistant Salmonella enterica serovar Typhi CT18.</title>
        <authorList>
            <person name="Parkhill J."/>
            <person name="Dougan G."/>
            <person name="James K.D."/>
            <person name="Thomson N.R."/>
            <person name="Pickard D."/>
            <person name="Wain J."/>
            <person name="Churcher C.M."/>
            <person name="Mungall K.L."/>
            <person name="Bentley S.D."/>
            <person name="Holden M.T.G."/>
            <person name="Sebaihia M."/>
            <person name="Baker S."/>
            <person name="Basham D."/>
            <person name="Brooks K."/>
            <person name="Chillingworth T."/>
            <person name="Connerton P."/>
            <person name="Cronin A."/>
            <person name="Davis P."/>
            <person name="Davies R.M."/>
            <person name="Dowd L."/>
            <person name="White N."/>
            <person name="Farrar J."/>
            <person name="Feltwell T."/>
            <person name="Hamlin N."/>
            <person name="Haque A."/>
            <person name="Hien T.T."/>
            <person name="Holroyd S."/>
            <person name="Jagels K."/>
            <person name="Krogh A."/>
            <person name="Larsen T.S."/>
            <person name="Leather S."/>
            <person name="Moule S."/>
            <person name="O'Gaora P."/>
            <person name="Parry C."/>
            <person name="Quail M.A."/>
            <person name="Rutherford K.M."/>
            <person name="Simmonds M."/>
            <person name="Skelton J."/>
            <person name="Stevens K."/>
            <person name="Whitehead S."/>
            <person name="Barrell B.G."/>
        </authorList>
    </citation>
    <scope>NUCLEOTIDE SEQUENCE [LARGE SCALE GENOMIC DNA]</scope>
    <source>
        <strain>CT18</strain>
    </source>
</reference>
<reference key="2">
    <citation type="journal article" date="2003" name="J. Bacteriol.">
        <title>Comparative genomics of Salmonella enterica serovar Typhi strains Ty2 and CT18.</title>
        <authorList>
            <person name="Deng W."/>
            <person name="Liou S.-R."/>
            <person name="Plunkett G. III"/>
            <person name="Mayhew G.F."/>
            <person name="Rose D.J."/>
            <person name="Burland V."/>
            <person name="Kodoyianni V."/>
            <person name="Schwartz D.C."/>
            <person name="Blattner F.R."/>
        </authorList>
    </citation>
    <scope>NUCLEOTIDE SEQUENCE [LARGE SCALE GENOMIC DNA]</scope>
    <source>
        <strain>ATCC 700931 / Ty2</strain>
    </source>
</reference>
<evidence type="ECO:0000250" key="1"/>
<evidence type="ECO:0000255" key="2">
    <source>
        <dbReference type="HAMAP-Rule" id="MF_01224"/>
    </source>
</evidence>
<keyword id="KW-0456">Lyase</keyword>
<keyword id="KW-0501">Molybdenum cofactor biosynthesis</keyword>
<gene>
    <name evidence="2" type="primary">moaC</name>
    <name type="ordered locus">STY0838</name>
    <name type="ordered locus">t2083</name>
</gene>
<proteinExistence type="inferred from homology"/>